<proteinExistence type="inferred from homology"/>
<dbReference type="EC" id="3.6.4.-" evidence="5"/>
<dbReference type="EMBL" id="M24113">
    <property type="protein sequence ID" value="AAA68886.1"/>
    <property type="molecule type" value="Genomic_DNA"/>
</dbReference>
<dbReference type="PIR" id="A48324">
    <property type="entry name" value="A48324"/>
</dbReference>
<dbReference type="SMR" id="P83750"/>
<dbReference type="Ensembl" id="ENSCCRT00010017547.1">
    <property type="protein sequence ID" value="ENSCCRP00010016129.1"/>
    <property type="gene ID" value="ENSCCRG00010006775.1"/>
</dbReference>
<dbReference type="Ensembl" id="ENSCCRT00010131241.1">
    <property type="protein sequence ID" value="ENSCCRP00010118123.1"/>
    <property type="gene ID" value="ENSCCRG00010051568.1"/>
</dbReference>
<dbReference type="Ensembl" id="ENSCCRT00015069410.1">
    <property type="protein sequence ID" value="ENSCCRP00015067222.1"/>
    <property type="gene ID" value="ENSCCRG00015027364.1"/>
</dbReference>
<dbReference type="Ensembl" id="ENSCCRT00015096027.1">
    <property type="protein sequence ID" value="ENSCCRP00015093044.1"/>
    <property type="gene ID" value="ENSCCRG00015037495.1"/>
</dbReference>
<dbReference type="Ensembl" id="ENSCCRT00020077492.1">
    <property type="protein sequence ID" value="ENSCCRP00020070537.1"/>
    <property type="gene ID" value="ENSCCRG00020031975.1"/>
</dbReference>
<dbReference type="Ensembl" id="ENSCCRT00020112476.1">
    <property type="protein sequence ID" value="ENSCCRP00020102940.1"/>
    <property type="gene ID" value="ENSCCRG00020046848.1"/>
</dbReference>
<dbReference type="OrthoDB" id="6953074at2759"/>
<dbReference type="Proteomes" id="UP000694384">
    <property type="component" value="Unplaced"/>
</dbReference>
<dbReference type="Proteomes" id="UP000694427">
    <property type="component" value="Unplaced"/>
</dbReference>
<dbReference type="Proteomes" id="UP000694700">
    <property type="component" value="Unplaced"/>
</dbReference>
<dbReference type="Proteomes" id="UP000694701">
    <property type="component" value="Unplaced"/>
</dbReference>
<dbReference type="Proteomes" id="UP001155660">
    <property type="component" value="Unplaced"/>
</dbReference>
<dbReference type="GO" id="GO:0015629">
    <property type="term" value="C:actin cytoskeleton"/>
    <property type="evidence" value="ECO:0000250"/>
    <property type="project" value="UniProtKB"/>
</dbReference>
<dbReference type="GO" id="GO:0005856">
    <property type="term" value="C:cytoskeleton"/>
    <property type="evidence" value="ECO:0000250"/>
    <property type="project" value="AgBase"/>
</dbReference>
<dbReference type="GO" id="GO:0097433">
    <property type="term" value="C:dense body"/>
    <property type="evidence" value="ECO:0000250"/>
    <property type="project" value="AgBase"/>
</dbReference>
<dbReference type="GO" id="GO:0005925">
    <property type="term" value="C:focal adhesion"/>
    <property type="evidence" value="ECO:0000250"/>
    <property type="project" value="AgBase"/>
</dbReference>
<dbReference type="GO" id="GO:0005634">
    <property type="term" value="C:nucleus"/>
    <property type="evidence" value="ECO:0000250"/>
    <property type="project" value="UniProtKB"/>
</dbReference>
<dbReference type="GO" id="GO:0005886">
    <property type="term" value="C:plasma membrane"/>
    <property type="evidence" value="ECO:0000250"/>
    <property type="project" value="AgBase"/>
</dbReference>
<dbReference type="GO" id="GO:0005524">
    <property type="term" value="F:ATP binding"/>
    <property type="evidence" value="ECO:0007669"/>
    <property type="project" value="UniProtKB-KW"/>
</dbReference>
<dbReference type="GO" id="GO:0016787">
    <property type="term" value="F:hydrolase activity"/>
    <property type="evidence" value="ECO:0007669"/>
    <property type="project" value="UniProtKB-KW"/>
</dbReference>
<dbReference type="CDD" id="cd10224">
    <property type="entry name" value="ASKHA_NBD_actin"/>
    <property type="match status" value="1"/>
</dbReference>
<dbReference type="FunFam" id="3.30.420.40:FF:000131">
    <property type="entry name" value="Actin, alpha skeletal muscle"/>
    <property type="match status" value="1"/>
</dbReference>
<dbReference type="FunFam" id="3.30.420.40:FF:000291">
    <property type="entry name" value="Actin, alpha skeletal muscle"/>
    <property type="match status" value="1"/>
</dbReference>
<dbReference type="FunFam" id="3.90.640.10:FF:000047">
    <property type="entry name" value="Actin, alpha skeletal muscle"/>
    <property type="match status" value="1"/>
</dbReference>
<dbReference type="FunFam" id="3.30.420.40:FF:000058">
    <property type="entry name" value="Putative actin-related protein 5"/>
    <property type="match status" value="1"/>
</dbReference>
<dbReference type="Gene3D" id="3.30.420.40">
    <property type="match status" value="2"/>
</dbReference>
<dbReference type="Gene3D" id="3.90.640.10">
    <property type="entry name" value="Actin, Chain A, domain 4"/>
    <property type="match status" value="1"/>
</dbReference>
<dbReference type="InterPro" id="IPR004000">
    <property type="entry name" value="Actin"/>
</dbReference>
<dbReference type="InterPro" id="IPR020902">
    <property type="entry name" value="Actin/actin-like_CS"/>
</dbReference>
<dbReference type="InterPro" id="IPR004001">
    <property type="entry name" value="Actin_CS"/>
</dbReference>
<dbReference type="InterPro" id="IPR043129">
    <property type="entry name" value="ATPase_NBD"/>
</dbReference>
<dbReference type="PANTHER" id="PTHR11937">
    <property type="entry name" value="ACTIN"/>
    <property type="match status" value="1"/>
</dbReference>
<dbReference type="Pfam" id="PF00022">
    <property type="entry name" value="Actin"/>
    <property type="match status" value="1"/>
</dbReference>
<dbReference type="PRINTS" id="PR00190">
    <property type="entry name" value="ACTIN"/>
</dbReference>
<dbReference type="SMART" id="SM00268">
    <property type="entry name" value="ACTIN"/>
    <property type="match status" value="1"/>
</dbReference>
<dbReference type="SUPFAM" id="SSF53067">
    <property type="entry name" value="Actin-like ATPase domain"/>
    <property type="match status" value="2"/>
</dbReference>
<dbReference type="PROSITE" id="PS00406">
    <property type="entry name" value="ACTINS_1"/>
    <property type="match status" value="1"/>
</dbReference>
<dbReference type="PROSITE" id="PS00432">
    <property type="entry name" value="ACTINS_2"/>
    <property type="match status" value="1"/>
</dbReference>
<dbReference type="PROSITE" id="PS01132">
    <property type="entry name" value="ACTINS_ACT_LIKE"/>
    <property type="match status" value="1"/>
</dbReference>
<evidence type="ECO:0000250" key="1">
    <source>
        <dbReference type="UniProtKB" id="O93400"/>
    </source>
</evidence>
<evidence type="ECO:0000250" key="2">
    <source>
        <dbReference type="UniProtKB" id="P60706"/>
    </source>
</evidence>
<evidence type="ECO:0000250" key="3">
    <source>
        <dbReference type="UniProtKB" id="P60709"/>
    </source>
</evidence>
<evidence type="ECO:0000250" key="4">
    <source>
        <dbReference type="UniProtKB" id="P60710"/>
    </source>
</evidence>
<evidence type="ECO:0000250" key="5">
    <source>
        <dbReference type="UniProtKB" id="P68137"/>
    </source>
</evidence>
<evidence type="ECO:0000305" key="6"/>
<protein>
    <recommendedName>
        <fullName>Actin, cytoplasmic 1</fullName>
        <ecNumber evidence="5">3.6.4.-</ecNumber>
    </recommendedName>
    <alternativeName>
        <fullName>Beta-actin</fullName>
    </alternativeName>
    <component>
        <recommendedName>
            <fullName>Actin, cytoplasmic 1, N-terminally processed</fullName>
        </recommendedName>
    </component>
</protein>
<keyword id="KW-0007">Acetylation</keyword>
<keyword id="KW-0067">ATP-binding</keyword>
<keyword id="KW-0963">Cytoplasm</keyword>
<keyword id="KW-0206">Cytoskeleton</keyword>
<keyword id="KW-0378">Hydrolase</keyword>
<keyword id="KW-0488">Methylation</keyword>
<keyword id="KW-0547">Nucleotide-binding</keyword>
<keyword id="KW-0539">Nucleus</keyword>
<keyword id="KW-0558">Oxidation</keyword>
<keyword id="KW-1185">Reference proteome</keyword>
<sequence>MDDEIAALVVDNGSGMCKAGFAGDDAPRAVFPSIVGRPRHQGVMVGMGQKDSYVGDEAQSKRGILTLKYPIEHGIVTNWDDMEKIWHHTFYNELRVAPEEHPVLLTEAPLNPKANREKMTQIMFETFNTPAMYVAIQAVLSLYASGRTTGIVMDSGDGVTHTVPIYEGYALPHAILRLDLAGRDLTDYLMKILTERGYSFTTTAEREIVRDIKEKLCYVALDFEQEMGTAASSSSLEKSYELPDGQVITIGNERFRCPEALFQPSFLGMESCGIHETTFNSIMKCDVDIRKDLYANTVLSGGTTMYPGIADRMQKEITSLAPSTMKIKIIAPPERKYSVWIGGSILASLSTFQQMWISKQEYDESGPSIVHRKCF</sequence>
<feature type="chain" id="PRO_0000367090" description="Actin, cytoplasmic 1">
    <location>
        <begin position="1"/>
        <end position="375"/>
    </location>
</feature>
<feature type="initiator methionine" description="Removed; alternate" evidence="2">
    <location>
        <position position="1"/>
    </location>
</feature>
<feature type="chain" id="PRO_0000000801" description="Actin, cytoplasmic 1, N-terminally processed">
    <location>
        <begin position="2"/>
        <end position="375"/>
    </location>
</feature>
<feature type="modified residue" description="N-acetylmethionine; in Actin, cytoplasmic 1; alternate" evidence="2">
    <location>
        <position position="1"/>
    </location>
</feature>
<feature type="modified residue" description="N-acetylaspartate; in Actin, cytoplasmic 1, N-terminally processed" evidence="2">
    <location>
        <position position="2"/>
    </location>
</feature>
<feature type="modified residue" description="Methionine (R)-sulfoxide" evidence="4">
    <location>
        <position position="44"/>
    </location>
</feature>
<feature type="modified residue" description="Methionine (R)-sulfoxide" evidence="4">
    <location>
        <position position="47"/>
    </location>
</feature>
<feature type="modified residue" description="Tele-methylhistidine" evidence="4">
    <location>
        <position position="73"/>
    </location>
</feature>
<accession>P83750</accession>
<accession>O73815</accession>
<accession>P12714</accession>
<name>ACTB_CYPCA</name>
<reference key="1">
    <citation type="journal article" date="1990" name="DNA Seq.">
        <title>Isolation and characterization of beta-actin gene of carp (Cyprinus carpio).</title>
        <authorList>
            <person name="Liu Z.J."/>
            <person name="Zhu Z.Y."/>
            <person name="Roberg K."/>
            <person name="Faras A.F."/>
            <person name="Guise K.S."/>
            <person name="Kapuscinski A.R."/>
            <person name="Hackett P.B."/>
        </authorList>
    </citation>
    <scope>NUCLEOTIDE SEQUENCE [GENOMIC DNA]</scope>
</reference>
<gene>
    <name type="primary">actb</name>
</gene>
<comment type="function">
    <text evidence="3">Actin is a highly conserved protein that polymerizes to produce filaments that form cross-linked networks in the cytoplasm of cells. Actin exists in both monomeric (G-actin) and polymeric (F-actin) forms, both forms playing key functions, such as cell motility and contraction. In addition to their role in the cytoplasmic cytoskeleton, G- and F-actin also localize in the nucleus, and regulate gene transcription and motility and repair of damaged DNA.</text>
</comment>
<comment type="catalytic activity">
    <reaction evidence="5">
        <text>ATP + H2O = ADP + phosphate + H(+)</text>
        <dbReference type="Rhea" id="RHEA:13065"/>
        <dbReference type="ChEBI" id="CHEBI:15377"/>
        <dbReference type="ChEBI" id="CHEBI:15378"/>
        <dbReference type="ChEBI" id="CHEBI:30616"/>
        <dbReference type="ChEBI" id="CHEBI:43474"/>
        <dbReference type="ChEBI" id="CHEBI:456216"/>
    </reaction>
</comment>
<comment type="subunit">
    <text evidence="3 4">Polymerization of globular actin (G-actin) leads to a structural filament (F-actin) in the form of a two-stranded helix (By similarity). Each actin can bind to 4 others (By similarity).</text>
</comment>
<comment type="subcellular location">
    <subcellularLocation>
        <location evidence="4">Cytoplasm</location>
        <location evidence="4">Cytoskeleton</location>
    </subcellularLocation>
    <subcellularLocation>
        <location evidence="1">Nucleus</location>
    </subcellularLocation>
</comment>
<comment type="PTM">
    <molecule>Actin, cytoplasmic 1</molecule>
    <text evidence="3">N-terminal cleavage of acetylated methionine of immature cytoplasmic actin by ACTMAP.</text>
</comment>
<comment type="PTM">
    <text evidence="4">Oxidation of Met-44 and Met-47 by MICALs (mical1, mical2 or mical3) to form methionine sulfoxide promotes actin filament depolymerization. Mical1 and mical2 produce the (R)-S-oxide form. The (R)-S-oxide form is reverted by msrb1 and msrb2, which promote actin repolymerization.</text>
</comment>
<comment type="PTM">
    <text evidence="2">Methylation at His-73 by SETD3. Methylation stabilizes actin filaments.</text>
</comment>
<comment type="miscellaneous">
    <text evidence="1">In vertebrates 3 main groups of actin isoforms, alpha, beta and gamma have been identified. The alpha actins are found in muscle tissues and are a major constituent of the contractile apparatus. The beta and gamma actins coexist in most cell types as components of the cytoskeleton and as mediators of internal cell motility.</text>
</comment>
<comment type="similarity">
    <text evidence="6">Belongs to the actin family.</text>
</comment>
<organism>
    <name type="scientific">Cyprinus carpio</name>
    <name type="common">Common carp</name>
    <dbReference type="NCBI Taxonomy" id="7962"/>
    <lineage>
        <taxon>Eukaryota</taxon>
        <taxon>Metazoa</taxon>
        <taxon>Chordata</taxon>
        <taxon>Craniata</taxon>
        <taxon>Vertebrata</taxon>
        <taxon>Euteleostomi</taxon>
        <taxon>Actinopterygii</taxon>
        <taxon>Neopterygii</taxon>
        <taxon>Teleostei</taxon>
        <taxon>Ostariophysi</taxon>
        <taxon>Cypriniformes</taxon>
        <taxon>Cyprinidae</taxon>
        <taxon>Cyprininae</taxon>
        <taxon>Cyprinus</taxon>
    </lineage>
</organism>